<protein>
    <recommendedName>
        <fullName>Ribonucleoside-diphosphate reductase subunit beta</fullName>
        <ecNumber>1.17.4.1</ecNumber>
    </recommendedName>
    <alternativeName>
        <fullName>Ribonucleotide reductase small subunit</fullName>
    </alternativeName>
</protein>
<accession>P50621</accession>
<proteinExistence type="evidence at protein level"/>
<name>RIR2_BACSU</name>
<reference key="1">
    <citation type="journal article" date="1996" name="Microbiology">
        <title>The Bacillus subtilis genes for ribonucleotide reductase are similar to the genes for the second class I NrdE/NrdF enzymes of Enterobacteriaceae.</title>
        <authorList>
            <person name="Scotti C."/>
            <person name="Valbuzzi A."/>
            <person name="Perego M."/>
            <person name="Galizzi A."/>
            <person name="Albertini A.M."/>
        </authorList>
    </citation>
    <scope>NUCLEOTIDE SEQUENCE [GENOMIC DNA]</scope>
    <scope>OPERON</scope>
    <scope>DISRUPTION PHENOTYPE</scope>
    <source>
        <strain>168</strain>
    </source>
</reference>
<reference key="2">
    <citation type="journal article" date="1997" name="Nature">
        <title>The complete genome sequence of the Gram-positive bacterium Bacillus subtilis.</title>
        <authorList>
            <person name="Kunst F."/>
            <person name="Ogasawara N."/>
            <person name="Moszer I."/>
            <person name="Albertini A.M."/>
            <person name="Alloni G."/>
            <person name="Azevedo V."/>
            <person name="Bertero M.G."/>
            <person name="Bessieres P."/>
            <person name="Bolotin A."/>
            <person name="Borchert S."/>
            <person name="Borriss R."/>
            <person name="Boursier L."/>
            <person name="Brans A."/>
            <person name="Braun M."/>
            <person name="Brignell S.C."/>
            <person name="Bron S."/>
            <person name="Brouillet S."/>
            <person name="Bruschi C.V."/>
            <person name="Caldwell B."/>
            <person name="Capuano V."/>
            <person name="Carter N.M."/>
            <person name="Choi S.-K."/>
            <person name="Codani J.-J."/>
            <person name="Connerton I.F."/>
            <person name="Cummings N.J."/>
            <person name="Daniel R.A."/>
            <person name="Denizot F."/>
            <person name="Devine K.M."/>
            <person name="Duesterhoeft A."/>
            <person name="Ehrlich S.D."/>
            <person name="Emmerson P.T."/>
            <person name="Entian K.-D."/>
            <person name="Errington J."/>
            <person name="Fabret C."/>
            <person name="Ferrari E."/>
            <person name="Foulger D."/>
            <person name="Fritz C."/>
            <person name="Fujita M."/>
            <person name="Fujita Y."/>
            <person name="Fuma S."/>
            <person name="Galizzi A."/>
            <person name="Galleron N."/>
            <person name="Ghim S.-Y."/>
            <person name="Glaser P."/>
            <person name="Goffeau A."/>
            <person name="Golightly E.J."/>
            <person name="Grandi G."/>
            <person name="Guiseppi G."/>
            <person name="Guy B.J."/>
            <person name="Haga K."/>
            <person name="Haiech J."/>
            <person name="Harwood C.R."/>
            <person name="Henaut A."/>
            <person name="Hilbert H."/>
            <person name="Holsappel S."/>
            <person name="Hosono S."/>
            <person name="Hullo M.-F."/>
            <person name="Itaya M."/>
            <person name="Jones L.-M."/>
            <person name="Joris B."/>
            <person name="Karamata D."/>
            <person name="Kasahara Y."/>
            <person name="Klaerr-Blanchard M."/>
            <person name="Klein C."/>
            <person name="Kobayashi Y."/>
            <person name="Koetter P."/>
            <person name="Koningstein G."/>
            <person name="Krogh S."/>
            <person name="Kumano M."/>
            <person name="Kurita K."/>
            <person name="Lapidus A."/>
            <person name="Lardinois S."/>
            <person name="Lauber J."/>
            <person name="Lazarevic V."/>
            <person name="Lee S.-M."/>
            <person name="Levine A."/>
            <person name="Liu H."/>
            <person name="Masuda S."/>
            <person name="Mauel C."/>
            <person name="Medigue C."/>
            <person name="Medina N."/>
            <person name="Mellado R.P."/>
            <person name="Mizuno M."/>
            <person name="Moestl D."/>
            <person name="Nakai S."/>
            <person name="Noback M."/>
            <person name="Noone D."/>
            <person name="O'Reilly M."/>
            <person name="Ogawa K."/>
            <person name="Ogiwara A."/>
            <person name="Oudega B."/>
            <person name="Park S.-H."/>
            <person name="Parro V."/>
            <person name="Pohl T.M."/>
            <person name="Portetelle D."/>
            <person name="Porwollik S."/>
            <person name="Prescott A.M."/>
            <person name="Presecan E."/>
            <person name="Pujic P."/>
            <person name="Purnelle B."/>
            <person name="Rapoport G."/>
            <person name="Rey M."/>
            <person name="Reynolds S."/>
            <person name="Rieger M."/>
            <person name="Rivolta C."/>
            <person name="Rocha E."/>
            <person name="Roche B."/>
            <person name="Rose M."/>
            <person name="Sadaie Y."/>
            <person name="Sato T."/>
            <person name="Scanlan E."/>
            <person name="Schleich S."/>
            <person name="Schroeter R."/>
            <person name="Scoffone F."/>
            <person name="Sekiguchi J."/>
            <person name="Sekowska A."/>
            <person name="Seror S.J."/>
            <person name="Serror P."/>
            <person name="Shin B.-S."/>
            <person name="Soldo B."/>
            <person name="Sorokin A."/>
            <person name="Tacconi E."/>
            <person name="Takagi T."/>
            <person name="Takahashi H."/>
            <person name="Takemaru K."/>
            <person name="Takeuchi M."/>
            <person name="Tamakoshi A."/>
            <person name="Tanaka T."/>
            <person name="Terpstra P."/>
            <person name="Tognoni A."/>
            <person name="Tosato V."/>
            <person name="Uchiyama S."/>
            <person name="Vandenbol M."/>
            <person name="Vannier F."/>
            <person name="Vassarotti A."/>
            <person name="Viari A."/>
            <person name="Wambutt R."/>
            <person name="Wedler E."/>
            <person name="Wedler H."/>
            <person name="Weitzenegger T."/>
            <person name="Winters P."/>
            <person name="Wipat A."/>
            <person name="Yamamoto H."/>
            <person name="Yamane K."/>
            <person name="Yasumoto K."/>
            <person name="Yata K."/>
            <person name="Yoshida K."/>
            <person name="Yoshikawa H.-F."/>
            <person name="Zumstein E."/>
            <person name="Yoshikawa H."/>
            <person name="Danchin A."/>
        </authorList>
    </citation>
    <scope>NUCLEOTIDE SEQUENCE [LARGE SCALE GENOMIC DNA]</scope>
    <source>
        <strain>168</strain>
    </source>
</reference>
<keyword id="KW-0002">3D-structure</keyword>
<keyword id="KW-0215">Deoxyribonucleotide synthesis</keyword>
<keyword id="KW-0408">Iron</keyword>
<keyword id="KW-0479">Metal-binding</keyword>
<keyword id="KW-0560">Oxidoreductase</keyword>
<keyword id="KW-1185">Reference proteome</keyword>
<feature type="chain" id="PRO_0000190469" description="Ribonucleoside-diphosphate reductase subunit beta">
    <location>
        <begin position="1"/>
        <end position="329"/>
    </location>
</feature>
<feature type="active site" evidence="2">
    <location>
        <position position="105"/>
    </location>
</feature>
<feature type="binding site" evidence="2">
    <location>
        <position position="66"/>
    </location>
    <ligand>
        <name>Fe cation</name>
        <dbReference type="ChEBI" id="CHEBI:24875"/>
        <label>1</label>
    </ligand>
</feature>
<feature type="binding site" evidence="2">
    <location>
        <position position="97"/>
    </location>
    <ligand>
        <name>Fe cation</name>
        <dbReference type="ChEBI" id="CHEBI:24875"/>
        <label>1</label>
    </ligand>
</feature>
<feature type="binding site" evidence="1">
    <location>
        <position position="97"/>
    </location>
    <ligand>
        <name>Fe cation</name>
        <dbReference type="ChEBI" id="CHEBI:24875"/>
        <label>2</label>
    </ligand>
</feature>
<feature type="binding site" evidence="2">
    <location>
        <position position="101"/>
    </location>
    <ligand>
        <name>Fe cation</name>
        <dbReference type="ChEBI" id="CHEBI:24875"/>
        <label>1</label>
    </ligand>
</feature>
<feature type="binding site" evidence="1">
    <location>
        <position position="164"/>
    </location>
    <ligand>
        <name>Fe cation</name>
        <dbReference type="ChEBI" id="CHEBI:24875"/>
        <label>2</label>
    </ligand>
</feature>
<feature type="binding site" evidence="1">
    <location>
        <position position="198"/>
    </location>
    <ligand>
        <name>Fe cation</name>
        <dbReference type="ChEBI" id="CHEBI:24875"/>
        <label>2</label>
    </ligand>
</feature>
<feature type="binding site" evidence="1">
    <location>
        <position position="201"/>
    </location>
    <ligand>
        <name>Fe cation</name>
        <dbReference type="ChEBI" id="CHEBI:24875"/>
        <label>2</label>
    </ligand>
</feature>
<feature type="strand" evidence="5">
    <location>
        <begin position="10"/>
        <end position="12"/>
    </location>
</feature>
<feature type="strand" evidence="5">
    <location>
        <begin position="14"/>
        <end position="17"/>
    </location>
</feature>
<feature type="helix" evidence="5">
    <location>
        <begin position="18"/>
        <end position="27"/>
    </location>
</feature>
<feature type="helix" evidence="5">
    <location>
        <begin position="32"/>
        <end position="34"/>
    </location>
</feature>
<feature type="helix" evidence="5">
    <location>
        <begin position="38"/>
        <end position="40"/>
    </location>
</feature>
<feature type="helix" evidence="5">
    <location>
        <begin position="41"/>
        <end position="45"/>
    </location>
</feature>
<feature type="helix" evidence="5">
    <location>
        <begin position="49"/>
        <end position="71"/>
    </location>
</feature>
<feature type="helix" evidence="5">
    <location>
        <begin position="73"/>
        <end position="80"/>
    </location>
</feature>
<feature type="helix" evidence="5">
    <location>
        <begin position="84"/>
        <end position="99"/>
    </location>
</feature>
<feature type="helix" evidence="5">
    <location>
        <begin position="101"/>
        <end position="112"/>
    </location>
</feature>
<feature type="helix" evidence="5">
    <location>
        <begin position="115"/>
        <end position="127"/>
    </location>
</feature>
<feature type="helix" evidence="5">
    <location>
        <begin position="129"/>
        <end position="143"/>
    </location>
</feature>
<feature type="helix" evidence="5">
    <location>
        <begin position="150"/>
        <end position="165"/>
    </location>
</feature>
<feature type="turn" evidence="5">
    <location>
        <begin position="166"/>
        <end position="168"/>
    </location>
</feature>
<feature type="helix" evidence="5">
    <location>
        <begin position="169"/>
        <end position="179"/>
    </location>
</feature>
<feature type="turn" evidence="5">
    <location>
        <begin position="180"/>
        <end position="182"/>
    </location>
</feature>
<feature type="helix" evidence="5">
    <location>
        <begin position="185"/>
        <end position="213"/>
    </location>
</feature>
<feature type="helix" evidence="5">
    <location>
        <begin position="218"/>
        <end position="247"/>
    </location>
</feature>
<feature type="helix" evidence="5">
    <location>
        <begin position="248"/>
        <end position="250"/>
    </location>
</feature>
<feature type="helix" evidence="5">
    <location>
        <begin position="253"/>
        <end position="270"/>
    </location>
</feature>
<feature type="helix" evidence="5">
    <location>
        <begin position="284"/>
        <end position="288"/>
    </location>
</feature>
<organism>
    <name type="scientific">Bacillus subtilis (strain 168)</name>
    <dbReference type="NCBI Taxonomy" id="224308"/>
    <lineage>
        <taxon>Bacteria</taxon>
        <taxon>Bacillati</taxon>
        <taxon>Bacillota</taxon>
        <taxon>Bacilli</taxon>
        <taxon>Bacillales</taxon>
        <taxon>Bacillaceae</taxon>
        <taxon>Bacillus</taxon>
    </lineage>
</organism>
<comment type="function">
    <text evidence="1">Provides the precursors necessary for DNA synthesis. Catalyzes the biosynthesis of deoxyribonucleotides from the corresponding ribonucleotides (By similarity).</text>
</comment>
<comment type="catalytic activity">
    <reaction evidence="2">
        <text>a 2'-deoxyribonucleoside 5'-diphosphate + [thioredoxin]-disulfide + H2O = a ribonucleoside 5'-diphosphate + [thioredoxin]-dithiol</text>
        <dbReference type="Rhea" id="RHEA:23252"/>
        <dbReference type="Rhea" id="RHEA-COMP:10698"/>
        <dbReference type="Rhea" id="RHEA-COMP:10700"/>
        <dbReference type="ChEBI" id="CHEBI:15377"/>
        <dbReference type="ChEBI" id="CHEBI:29950"/>
        <dbReference type="ChEBI" id="CHEBI:50058"/>
        <dbReference type="ChEBI" id="CHEBI:57930"/>
        <dbReference type="ChEBI" id="CHEBI:73316"/>
        <dbReference type="EC" id="1.17.4.1"/>
    </reaction>
</comment>
<comment type="cofactor">
    <cofactor evidence="1">
        <name>Fe cation</name>
        <dbReference type="ChEBI" id="CHEBI:24875"/>
    </cofactor>
    <text evidence="1">Binds 2 iron ions per subunit.</text>
</comment>
<comment type="subunit">
    <text evidence="1">Tetramer of two alpha and two beta subunits.</text>
</comment>
<comment type="induction">
    <text evidence="3">Part of the probable nrdI(ymaA)-nrdE-nrdF-ymaB operon. Expression is constitutive but low, dramatically induced by thymidine starvation which requires recA.</text>
</comment>
<comment type="disruption phenotype">
    <text evidence="3">Essential, at least the last 3 genes of the locus cannot be deleted; could be due to polar effects on downstream ymaB.</text>
</comment>
<comment type="similarity">
    <text evidence="4">Belongs to the ribonucleoside diphosphate reductase small chain family.</text>
</comment>
<evidence type="ECO:0000250" key="1"/>
<evidence type="ECO:0000255" key="2">
    <source>
        <dbReference type="PROSITE-ProRule" id="PRU10014"/>
    </source>
</evidence>
<evidence type="ECO:0000269" key="3">
    <source>
    </source>
</evidence>
<evidence type="ECO:0000305" key="4"/>
<evidence type="ECO:0007829" key="5">
    <source>
        <dbReference type="PDB" id="4DR0"/>
    </source>
</evidence>
<dbReference type="EC" id="1.17.4.1"/>
<dbReference type="EMBL" id="Z68500">
    <property type="protein sequence ID" value="CAA92811.1"/>
    <property type="molecule type" value="Genomic_DNA"/>
</dbReference>
<dbReference type="EMBL" id="AL009126">
    <property type="protein sequence ID" value="CAB13623.1"/>
    <property type="molecule type" value="Genomic_DNA"/>
</dbReference>
<dbReference type="PIR" id="C69667">
    <property type="entry name" value="C69667"/>
</dbReference>
<dbReference type="RefSeq" id="NP_389621.1">
    <property type="nucleotide sequence ID" value="NC_000964.3"/>
</dbReference>
<dbReference type="RefSeq" id="WP_003231754.1">
    <property type="nucleotide sequence ID" value="NZ_OZ025638.1"/>
</dbReference>
<dbReference type="PDB" id="4DR0">
    <property type="method" value="X-ray"/>
    <property type="resolution" value="1.90 A"/>
    <property type="chains" value="A/B=1-329"/>
</dbReference>
<dbReference type="PDBsum" id="4DR0"/>
<dbReference type="SMR" id="P50621"/>
<dbReference type="FunCoup" id="P50621">
    <property type="interactions" value="450"/>
</dbReference>
<dbReference type="STRING" id="224308.BSU17390"/>
<dbReference type="jPOST" id="P50621"/>
<dbReference type="PaxDb" id="224308-BSU17390"/>
<dbReference type="EnsemblBacteria" id="CAB13623">
    <property type="protein sequence ID" value="CAB13623"/>
    <property type="gene ID" value="BSU_17390"/>
</dbReference>
<dbReference type="GeneID" id="940076"/>
<dbReference type="KEGG" id="bsu:BSU17390"/>
<dbReference type="PATRIC" id="fig|224308.179.peg.1885"/>
<dbReference type="eggNOG" id="COG0208">
    <property type="taxonomic scope" value="Bacteria"/>
</dbReference>
<dbReference type="InParanoid" id="P50621"/>
<dbReference type="OrthoDB" id="9766544at2"/>
<dbReference type="PhylomeDB" id="P50621"/>
<dbReference type="BioCyc" id="BSUB:BSU17390-MONOMER"/>
<dbReference type="EvolutionaryTrace" id="P50621"/>
<dbReference type="Proteomes" id="UP000001570">
    <property type="component" value="Chromosome"/>
</dbReference>
<dbReference type="GO" id="GO:0005971">
    <property type="term" value="C:ribonucleoside-diphosphate reductase complex"/>
    <property type="evidence" value="ECO:0007669"/>
    <property type="project" value="InterPro"/>
</dbReference>
<dbReference type="GO" id="GO:0046872">
    <property type="term" value="F:metal ion binding"/>
    <property type="evidence" value="ECO:0007669"/>
    <property type="project" value="UniProtKB-KW"/>
</dbReference>
<dbReference type="GO" id="GO:0004748">
    <property type="term" value="F:ribonucleoside-diphosphate reductase activity, thioredoxin disulfide as acceptor"/>
    <property type="evidence" value="ECO:0007669"/>
    <property type="project" value="UniProtKB-EC"/>
</dbReference>
<dbReference type="GO" id="GO:0009263">
    <property type="term" value="P:deoxyribonucleotide biosynthetic process"/>
    <property type="evidence" value="ECO:0007669"/>
    <property type="project" value="UniProtKB-KW"/>
</dbReference>
<dbReference type="CDD" id="cd01049">
    <property type="entry name" value="RNRR2"/>
    <property type="match status" value="1"/>
</dbReference>
<dbReference type="Gene3D" id="1.10.620.20">
    <property type="entry name" value="Ribonucleotide Reductase, subunit A"/>
    <property type="match status" value="1"/>
</dbReference>
<dbReference type="InterPro" id="IPR009078">
    <property type="entry name" value="Ferritin-like_SF"/>
</dbReference>
<dbReference type="InterPro" id="IPR012348">
    <property type="entry name" value="RNR-like"/>
</dbReference>
<dbReference type="InterPro" id="IPR026494">
    <property type="entry name" value="RNR_NrdF-like"/>
</dbReference>
<dbReference type="InterPro" id="IPR033909">
    <property type="entry name" value="RNR_small"/>
</dbReference>
<dbReference type="InterPro" id="IPR030475">
    <property type="entry name" value="RNR_small_AS"/>
</dbReference>
<dbReference type="InterPro" id="IPR000358">
    <property type="entry name" value="RNR_small_fam"/>
</dbReference>
<dbReference type="NCBIfam" id="NF007183">
    <property type="entry name" value="PRK09614.1-2"/>
    <property type="match status" value="1"/>
</dbReference>
<dbReference type="NCBIfam" id="TIGR04171">
    <property type="entry name" value="RNR_1b_NrdF"/>
    <property type="match status" value="1"/>
</dbReference>
<dbReference type="PANTHER" id="PTHR23409">
    <property type="entry name" value="RIBONUCLEOSIDE-DIPHOSPHATE REDUCTASE SMALL CHAIN"/>
    <property type="match status" value="1"/>
</dbReference>
<dbReference type="PANTHER" id="PTHR23409:SF18">
    <property type="entry name" value="RIBONUCLEOSIDE-DIPHOSPHATE REDUCTASE SUBUNIT M2"/>
    <property type="match status" value="1"/>
</dbReference>
<dbReference type="Pfam" id="PF00268">
    <property type="entry name" value="Ribonuc_red_sm"/>
    <property type="match status" value="1"/>
</dbReference>
<dbReference type="PIRSF" id="PIRSF000355">
    <property type="entry name" value="NrdB"/>
    <property type="match status" value="1"/>
</dbReference>
<dbReference type="SUPFAM" id="SSF47240">
    <property type="entry name" value="Ferritin-like"/>
    <property type="match status" value="1"/>
</dbReference>
<dbReference type="PROSITE" id="PS00368">
    <property type="entry name" value="RIBORED_SMALL"/>
    <property type="match status" value="1"/>
</dbReference>
<gene>
    <name type="primary">nrdF</name>
    <name type="ordered locus">BSU17390</name>
</gene>
<sequence length="329" mass="38379">MTKIYDAANWSKHEDDFTQMFYNQNVKQFWLPEEIALNGDLLTWKYLGKNEQDTYMKVLAGLTLLDTEQGNTGMPIVAEHVDGHQRKAVLNFMAMMENAVHAKSYSNIFMTLAPTETINEVFEWVKQNKYLQKKAQMIVGLYKAIQKDDEISLFKAMVASVYLESFLFYSGFYYPLYFYGQGKLMQSGEIINLILRDEAIHGVYVGLLAQEIYNKQTEEKKAELREFAIDLLNQLYENELEYTEDLYDQVGLSHDVKKFIRYNANKALMNLGFDPYFEEEDINPIVLNGLNTKTKSHDFFSMKGNGYKKATVEPLKDDDFYFEDEKEQI</sequence>